<comment type="function">
    <text evidence="1">Increases the formation of ribosomal termination complexes and stimulates activities of RF-1 and RF-2. It binds guanine nucleotides and has strong preference for UGA stop codons. It may interact directly with the ribosome. The stimulation of RF-1 and RF-2 is significantly reduced by GTP and GDP, but not by GMP.</text>
</comment>
<comment type="subcellular location">
    <subcellularLocation>
        <location evidence="1">Cytoplasm</location>
    </subcellularLocation>
</comment>
<comment type="similarity">
    <text evidence="1">Belongs to the TRAFAC class translation factor GTPase superfamily. Classic translation factor GTPase family. PrfC subfamily.</text>
</comment>
<name>RF3_NITV2</name>
<sequence length="529" mass="59637">MSTRLEREVARRRTFAIISHPDAGKTTLTEKLLLFGGAIQMAGAVKARKSGRHATSDWMAMERERGISVTTSVMQFPYGDHMVNLLDTPGHQDFSEDTYRVLTAVDSALVVIDVAKGVEAQTRKLMDVCRLRDTPVMTFINKLDRDGLPPLDVMADIEENLRIECVPLTWPIGMGSDFKGTYNLLKRELHLFSASHHGRIQEGILIRDLDDPLLDEHLGPQADALRMDLALLEEAGTPFSREKYLRGEQTPVFFGSAINNFGVRELLDNFVDLAPAPRPRPAITREVSPHEESFTGVVFKIQANMDKAHRDRMAFMRICSGTFTRGMKLRHHRVGKDVTVANATIFLAQDRSGVEEAFPGDIIGIPNHGTIKIGDTFTESKEELKFTGIPSFSPEHFRRVRLRNPLKAKQLQKGLEQLAEEGAVQLFRPQVNNDYILGAVGVLQFDVIISRLHDEYSVEAAYEPCSIHTARWLHCNDRKVFAEFCDYYSAELAIDAEGALAYLAPNPWRLESAMERYPAVEFRTTREIR</sequence>
<accession>Q726J1</accession>
<feature type="chain" id="PRO_0000242175" description="Peptide chain release factor 3">
    <location>
        <begin position="1"/>
        <end position="529"/>
    </location>
</feature>
<feature type="domain" description="tr-type G">
    <location>
        <begin position="10"/>
        <end position="278"/>
    </location>
</feature>
<feature type="binding site" evidence="1">
    <location>
        <begin position="19"/>
        <end position="26"/>
    </location>
    <ligand>
        <name>GTP</name>
        <dbReference type="ChEBI" id="CHEBI:37565"/>
    </ligand>
</feature>
<feature type="binding site" evidence="1">
    <location>
        <begin position="87"/>
        <end position="91"/>
    </location>
    <ligand>
        <name>GTP</name>
        <dbReference type="ChEBI" id="CHEBI:37565"/>
    </ligand>
</feature>
<feature type="binding site" evidence="1">
    <location>
        <begin position="141"/>
        <end position="144"/>
    </location>
    <ligand>
        <name>GTP</name>
        <dbReference type="ChEBI" id="CHEBI:37565"/>
    </ligand>
</feature>
<dbReference type="EMBL" id="AE017285">
    <property type="protein sequence ID" value="AAS97587.1"/>
    <property type="molecule type" value="Genomic_DNA"/>
</dbReference>
<dbReference type="RefSeq" id="WP_010940375.1">
    <property type="nucleotide sequence ID" value="NC_002937.3"/>
</dbReference>
<dbReference type="RefSeq" id="YP_012327.1">
    <property type="nucleotide sequence ID" value="NC_002937.3"/>
</dbReference>
<dbReference type="SMR" id="Q726J1"/>
<dbReference type="STRING" id="882.DVU_3116"/>
<dbReference type="PaxDb" id="882-DVU_3116"/>
<dbReference type="EnsemblBacteria" id="AAS97587">
    <property type="protein sequence ID" value="AAS97587"/>
    <property type="gene ID" value="DVU_3116"/>
</dbReference>
<dbReference type="KEGG" id="dvu:DVU_3116"/>
<dbReference type="PATRIC" id="fig|882.5.peg.2826"/>
<dbReference type="eggNOG" id="COG4108">
    <property type="taxonomic scope" value="Bacteria"/>
</dbReference>
<dbReference type="HOGENOM" id="CLU_002794_2_1_7"/>
<dbReference type="OrthoDB" id="9801472at2"/>
<dbReference type="PhylomeDB" id="Q726J1"/>
<dbReference type="Proteomes" id="UP000002194">
    <property type="component" value="Chromosome"/>
</dbReference>
<dbReference type="GO" id="GO:0005829">
    <property type="term" value="C:cytosol"/>
    <property type="evidence" value="ECO:0007669"/>
    <property type="project" value="TreeGrafter"/>
</dbReference>
<dbReference type="GO" id="GO:0005525">
    <property type="term" value="F:GTP binding"/>
    <property type="evidence" value="ECO:0007669"/>
    <property type="project" value="UniProtKB-UniRule"/>
</dbReference>
<dbReference type="GO" id="GO:0003924">
    <property type="term" value="F:GTPase activity"/>
    <property type="evidence" value="ECO:0007669"/>
    <property type="project" value="InterPro"/>
</dbReference>
<dbReference type="GO" id="GO:0016150">
    <property type="term" value="F:translation release factor activity, codon nonspecific"/>
    <property type="evidence" value="ECO:0007669"/>
    <property type="project" value="TreeGrafter"/>
</dbReference>
<dbReference type="GO" id="GO:0016149">
    <property type="term" value="F:translation release factor activity, codon specific"/>
    <property type="evidence" value="ECO:0007669"/>
    <property type="project" value="UniProtKB-UniRule"/>
</dbReference>
<dbReference type="GO" id="GO:0006449">
    <property type="term" value="P:regulation of translational termination"/>
    <property type="evidence" value="ECO:0007669"/>
    <property type="project" value="UniProtKB-UniRule"/>
</dbReference>
<dbReference type="CDD" id="cd04169">
    <property type="entry name" value="RF3"/>
    <property type="match status" value="1"/>
</dbReference>
<dbReference type="CDD" id="cd03689">
    <property type="entry name" value="RF3_II"/>
    <property type="match status" value="1"/>
</dbReference>
<dbReference type="CDD" id="cd16259">
    <property type="entry name" value="RF3_III"/>
    <property type="match status" value="1"/>
</dbReference>
<dbReference type="FunFam" id="3.30.70.3280:FF:000001">
    <property type="entry name" value="Peptide chain release factor 3"/>
    <property type="match status" value="1"/>
</dbReference>
<dbReference type="FunFam" id="3.40.50.300:FF:000542">
    <property type="entry name" value="Peptide chain release factor 3"/>
    <property type="match status" value="1"/>
</dbReference>
<dbReference type="Gene3D" id="3.40.50.300">
    <property type="entry name" value="P-loop containing nucleotide triphosphate hydrolases"/>
    <property type="match status" value="3"/>
</dbReference>
<dbReference type="Gene3D" id="3.30.70.3280">
    <property type="entry name" value="Peptide chain release factor 3, domain III"/>
    <property type="match status" value="1"/>
</dbReference>
<dbReference type="HAMAP" id="MF_00072">
    <property type="entry name" value="Rel_fac_3"/>
    <property type="match status" value="1"/>
</dbReference>
<dbReference type="InterPro" id="IPR053905">
    <property type="entry name" value="EF-G-like_DII"/>
</dbReference>
<dbReference type="InterPro" id="IPR035647">
    <property type="entry name" value="EFG_III/V"/>
</dbReference>
<dbReference type="InterPro" id="IPR031157">
    <property type="entry name" value="G_TR_CS"/>
</dbReference>
<dbReference type="InterPro" id="IPR027417">
    <property type="entry name" value="P-loop_NTPase"/>
</dbReference>
<dbReference type="InterPro" id="IPR004548">
    <property type="entry name" value="PrfC"/>
</dbReference>
<dbReference type="InterPro" id="IPR032090">
    <property type="entry name" value="RF3_C"/>
</dbReference>
<dbReference type="InterPro" id="IPR038467">
    <property type="entry name" value="RF3_dom_3_sf"/>
</dbReference>
<dbReference type="InterPro" id="IPR041732">
    <property type="entry name" value="RF3_GTP-bd"/>
</dbReference>
<dbReference type="InterPro" id="IPR005225">
    <property type="entry name" value="Small_GTP-bd"/>
</dbReference>
<dbReference type="InterPro" id="IPR000795">
    <property type="entry name" value="T_Tr_GTP-bd_dom"/>
</dbReference>
<dbReference type="InterPro" id="IPR009000">
    <property type="entry name" value="Transl_B-barrel_sf"/>
</dbReference>
<dbReference type="NCBIfam" id="TIGR00503">
    <property type="entry name" value="prfC"/>
    <property type="match status" value="1"/>
</dbReference>
<dbReference type="NCBIfam" id="NF001964">
    <property type="entry name" value="PRK00741.1"/>
    <property type="match status" value="1"/>
</dbReference>
<dbReference type="NCBIfam" id="TIGR00231">
    <property type="entry name" value="small_GTP"/>
    <property type="match status" value="1"/>
</dbReference>
<dbReference type="PANTHER" id="PTHR43556">
    <property type="entry name" value="PEPTIDE CHAIN RELEASE FACTOR RF3"/>
    <property type="match status" value="1"/>
</dbReference>
<dbReference type="PANTHER" id="PTHR43556:SF2">
    <property type="entry name" value="PEPTIDE CHAIN RELEASE FACTOR RF3"/>
    <property type="match status" value="1"/>
</dbReference>
<dbReference type="Pfam" id="PF22042">
    <property type="entry name" value="EF-G_D2"/>
    <property type="match status" value="1"/>
</dbReference>
<dbReference type="Pfam" id="PF00009">
    <property type="entry name" value="GTP_EFTU"/>
    <property type="match status" value="1"/>
</dbReference>
<dbReference type="Pfam" id="PF16658">
    <property type="entry name" value="RF3_C"/>
    <property type="match status" value="1"/>
</dbReference>
<dbReference type="PRINTS" id="PR00315">
    <property type="entry name" value="ELONGATNFCT"/>
</dbReference>
<dbReference type="SUPFAM" id="SSF54980">
    <property type="entry name" value="EF-G C-terminal domain-like"/>
    <property type="match status" value="1"/>
</dbReference>
<dbReference type="SUPFAM" id="SSF52540">
    <property type="entry name" value="P-loop containing nucleoside triphosphate hydrolases"/>
    <property type="match status" value="1"/>
</dbReference>
<dbReference type="SUPFAM" id="SSF50447">
    <property type="entry name" value="Translation proteins"/>
    <property type="match status" value="1"/>
</dbReference>
<dbReference type="PROSITE" id="PS00301">
    <property type="entry name" value="G_TR_1"/>
    <property type="match status" value="1"/>
</dbReference>
<dbReference type="PROSITE" id="PS51722">
    <property type="entry name" value="G_TR_2"/>
    <property type="match status" value="1"/>
</dbReference>
<keyword id="KW-0963">Cytoplasm</keyword>
<keyword id="KW-0342">GTP-binding</keyword>
<keyword id="KW-0547">Nucleotide-binding</keyword>
<keyword id="KW-0648">Protein biosynthesis</keyword>
<keyword id="KW-1185">Reference proteome</keyword>
<organism>
    <name type="scientific">Nitratidesulfovibrio vulgaris (strain ATCC 29579 / DSM 644 / CCUG 34227 / NCIMB 8303 / VKM B-1760 / Hildenborough)</name>
    <name type="common">Desulfovibrio vulgaris</name>
    <dbReference type="NCBI Taxonomy" id="882"/>
    <lineage>
        <taxon>Bacteria</taxon>
        <taxon>Pseudomonadati</taxon>
        <taxon>Thermodesulfobacteriota</taxon>
        <taxon>Desulfovibrionia</taxon>
        <taxon>Desulfovibrionales</taxon>
        <taxon>Desulfovibrionaceae</taxon>
        <taxon>Nitratidesulfovibrio</taxon>
    </lineage>
</organism>
<proteinExistence type="inferred from homology"/>
<gene>
    <name evidence="1" type="primary">prfC</name>
    <name type="ordered locus">DVU_3116</name>
</gene>
<reference key="1">
    <citation type="journal article" date="2004" name="Nat. Biotechnol.">
        <title>The genome sequence of the anaerobic, sulfate-reducing bacterium Desulfovibrio vulgaris Hildenborough.</title>
        <authorList>
            <person name="Heidelberg J.F."/>
            <person name="Seshadri R."/>
            <person name="Haveman S.A."/>
            <person name="Hemme C.L."/>
            <person name="Paulsen I.T."/>
            <person name="Kolonay J.F."/>
            <person name="Eisen J.A."/>
            <person name="Ward N.L."/>
            <person name="Methe B.A."/>
            <person name="Brinkac L.M."/>
            <person name="Daugherty S.C."/>
            <person name="DeBoy R.T."/>
            <person name="Dodson R.J."/>
            <person name="Durkin A.S."/>
            <person name="Madupu R."/>
            <person name="Nelson W.C."/>
            <person name="Sullivan S.A."/>
            <person name="Fouts D.E."/>
            <person name="Haft D.H."/>
            <person name="Selengut J."/>
            <person name="Peterson J.D."/>
            <person name="Davidsen T.M."/>
            <person name="Zafar N."/>
            <person name="Zhou L."/>
            <person name="Radune D."/>
            <person name="Dimitrov G."/>
            <person name="Hance M."/>
            <person name="Tran K."/>
            <person name="Khouri H.M."/>
            <person name="Gill J."/>
            <person name="Utterback T.R."/>
            <person name="Feldblyum T.V."/>
            <person name="Wall J.D."/>
            <person name="Voordouw G."/>
            <person name="Fraser C.M."/>
        </authorList>
    </citation>
    <scope>NUCLEOTIDE SEQUENCE [LARGE SCALE GENOMIC DNA]</scope>
    <source>
        <strain>ATCC 29579 / DSM 644 / CCUG 34227 / NCIMB 8303 / VKM B-1760 / Hildenborough</strain>
    </source>
</reference>
<evidence type="ECO:0000255" key="1">
    <source>
        <dbReference type="HAMAP-Rule" id="MF_00072"/>
    </source>
</evidence>
<protein>
    <recommendedName>
        <fullName evidence="1">Peptide chain release factor 3</fullName>
        <shortName evidence="1">RF-3</shortName>
    </recommendedName>
</protein>